<proteinExistence type="evidence at transcript level"/>
<organism>
    <name type="scientific">Pongo abelii</name>
    <name type="common">Sumatran orangutan</name>
    <name type="synonym">Pongo pygmaeus abelii</name>
    <dbReference type="NCBI Taxonomy" id="9601"/>
    <lineage>
        <taxon>Eukaryota</taxon>
        <taxon>Metazoa</taxon>
        <taxon>Chordata</taxon>
        <taxon>Craniata</taxon>
        <taxon>Vertebrata</taxon>
        <taxon>Euteleostomi</taxon>
        <taxon>Mammalia</taxon>
        <taxon>Eutheria</taxon>
        <taxon>Euarchontoglires</taxon>
        <taxon>Primates</taxon>
        <taxon>Haplorrhini</taxon>
        <taxon>Catarrhini</taxon>
        <taxon>Hominidae</taxon>
        <taxon>Pongo</taxon>
    </lineage>
</organism>
<evidence type="ECO:0000250" key="1"/>
<evidence type="ECO:0000255" key="2">
    <source>
        <dbReference type="PROSITE-ProRule" id="PRU00042"/>
    </source>
</evidence>
<evidence type="ECO:0000255" key="3">
    <source>
        <dbReference type="PROSITE-ProRule" id="PRU00190"/>
    </source>
</evidence>
<evidence type="ECO:0000256" key="4">
    <source>
        <dbReference type="SAM" id="MobiDB-lite"/>
    </source>
</evidence>
<evidence type="ECO:0000305" key="5"/>
<comment type="function">
    <text evidence="1">May function as a transcription factor involved in cell differentiation.</text>
</comment>
<comment type="subcellular location">
    <subcellularLocation>
        <location evidence="5">Nucleus</location>
    </subcellularLocation>
</comment>
<comment type="similarity">
    <text evidence="3">Belongs to the class V-like SAM-binding methyltransferase superfamily.</text>
</comment>
<dbReference type="EC" id="2.1.1.-"/>
<dbReference type="EMBL" id="CR860836">
    <property type="protein sequence ID" value="CAH92945.1"/>
    <property type="molecule type" value="mRNA"/>
</dbReference>
<dbReference type="RefSeq" id="NP_001126735.1">
    <property type="nucleotide sequence ID" value="NM_001133263.1"/>
</dbReference>
<dbReference type="RefSeq" id="XP_009246470.1">
    <property type="nucleotide sequence ID" value="XM_009248195.1"/>
</dbReference>
<dbReference type="RefSeq" id="XP_063567675.1">
    <property type="nucleotide sequence ID" value="XM_063711605.1"/>
</dbReference>
<dbReference type="BMRB" id="Q5R5M1"/>
<dbReference type="SMR" id="Q5R5M1"/>
<dbReference type="FunCoup" id="Q5R5M1">
    <property type="interactions" value="3131"/>
</dbReference>
<dbReference type="STRING" id="9601.ENSPPYP00000005606"/>
<dbReference type="GeneID" id="100173737"/>
<dbReference type="KEGG" id="pon:100173737"/>
<dbReference type="CTD" id="11108"/>
<dbReference type="eggNOG" id="KOG1721">
    <property type="taxonomic scope" value="Eukaryota"/>
</dbReference>
<dbReference type="eggNOG" id="KOG2461">
    <property type="taxonomic scope" value="Eukaryota"/>
</dbReference>
<dbReference type="HOGENOM" id="CLU_019772_0_0_1"/>
<dbReference type="InParanoid" id="Q5R5M1"/>
<dbReference type="OrthoDB" id="654211at2759"/>
<dbReference type="TreeFam" id="TF332513"/>
<dbReference type="Proteomes" id="UP000001595">
    <property type="component" value="Chromosome 12"/>
</dbReference>
<dbReference type="GO" id="GO:0005634">
    <property type="term" value="C:nucleus"/>
    <property type="evidence" value="ECO:0007669"/>
    <property type="project" value="UniProtKB-SubCell"/>
</dbReference>
<dbReference type="GO" id="GO:0003677">
    <property type="term" value="F:DNA binding"/>
    <property type="evidence" value="ECO:0007669"/>
    <property type="project" value="UniProtKB-KW"/>
</dbReference>
<dbReference type="GO" id="GO:0000981">
    <property type="term" value="F:DNA-binding transcription factor activity, RNA polymerase II-specific"/>
    <property type="evidence" value="ECO:0007669"/>
    <property type="project" value="TreeGrafter"/>
</dbReference>
<dbReference type="GO" id="GO:1990226">
    <property type="term" value="F:histone methyltransferase binding"/>
    <property type="evidence" value="ECO:0007669"/>
    <property type="project" value="InterPro"/>
</dbReference>
<dbReference type="GO" id="GO:0008168">
    <property type="term" value="F:methyltransferase activity"/>
    <property type="evidence" value="ECO:0007669"/>
    <property type="project" value="UniProtKB-KW"/>
</dbReference>
<dbReference type="GO" id="GO:0008270">
    <property type="term" value="F:zinc ion binding"/>
    <property type="evidence" value="ECO:0007669"/>
    <property type="project" value="UniProtKB-KW"/>
</dbReference>
<dbReference type="GO" id="GO:0032259">
    <property type="term" value="P:methylation"/>
    <property type="evidence" value="ECO:0007669"/>
    <property type="project" value="UniProtKB-KW"/>
</dbReference>
<dbReference type="GO" id="GO:0006366">
    <property type="term" value="P:transcription by RNA polymerase II"/>
    <property type="evidence" value="ECO:0007669"/>
    <property type="project" value="InterPro"/>
</dbReference>
<dbReference type="CDD" id="cd19189">
    <property type="entry name" value="PR-SET_PRDM4"/>
    <property type="match status" value="1"/>
</dbReference>
<dbReference type="FunFam" id="2.170.270.10:FF:000022">
    <property type="entry name" value="PR domain zinc finger protein 4"/>
    <property type="match status" value="1"/>
</dbReference>
<dbReference type="FunFam" id="3.30.160.60:FF:000436">
    <property type="entry name" value="PR domain zinc finger protein 4"/>
    <property type="match status" value="1"/>
</dbReference>
<dbReference type="FunFam" id="3.30.160.60:FF:000723">
    <property type="entry name" value="PR domain zinc finger protein 4"/>
    <property type="match status" value="1"/>
</dbReference>
<dbReference type="FunFam" id="3.30.160.60:FF:000804">
    <property type="entry name" value="PR domain zinc finger protein 4"/>
    <property type="match status" value="1"/>
</dbReference>
<dbReference type="FunFam" id="3.30.160.60:FF:000840">
    <property type="entry name" value="PR domain zinc finger protein 4"/>
    <property type="match status" value="1"/>
</dbReference>
<dbReference type="FunFam" id="3.30.160.60:FF:000922">
    <property type="entry name" value="PR domain zinc finger protein 4"/>
    <property type="match status" value="1"/>
</dbReference>
<dbReference type="Gene3D" id="3.30.160.60">
    <property type="entry name" value="Classic Zinc Finger"/>
    <property type="match status" value="5"/>
</dbReference>
<dbReference type="Gene3D" id="2.170.270.10">
    <property type="entry name" value="SET domain"/>
    <property type="match status" value="1"/>
</dbReference>
<dbReference type="InterPro" id="IPR017124">
    <property type="entry name" value="PRDM4"/>
</dbReference>
<dbReference type="InterPro" id="IPR044404">
    <property type="entry name" value="PRDM4_PR/SET"/>
</dbReference>
<dbReference type="InterPro" id="IPR041493">
    <property type="entry name" value="PRDM4_Znf"/>
</dbReference>
<dbReference type="InterPro" id="IPR001214">
    <property type="entry name" value="SET_dom"/>
</dbReference>
<dbReference type="InterPro" id="IPR046341">
    <property type="entry name" value="SET_dom_sf"/>
</dbReference>
<dbReference type="InterPro" id="IPR050331">
    <property type="entry name" value="Zinc_finger"/>
</dbReference>
<dbReference type="InterPro" id="IPR036236">
    <property type="entry name" value="Znf_C2H2_sf"/>
</dbReference>
<dbReference type="InterPro" id="IPR013087">
    <property type="entry name" value="Znf_C2H2_type"/>
</dbReference>
<dbReference type="PANTHER" id="PTHR16515">
    <property type="entry name" value="PR DOMAIN ZINC FINGER PROTEIN"/>
    <property type="match status" value="1"/>
</dbReference>
<dbReference type="PANTHER" id="PTHR16515:SF2">
    <property type="entry name" value="PR DOMAIN ZINC FINGER PROTEIN 4"/>
    <property type="match status" value="1"/>
</dbReference>
<dbReference type="Pfam" id="PF21549">
    <property type="entry name" value="PRDM2_PR"/>
    <property type="match status" value="1"/>
</dbReference>
<dbReference type="Pfam" id="PF00096">
    <property type="entry name" value="zf-C2H2"/>
    <property type="match status" value="3"/>
</dbReference>
<dbReference type="Pfam" id="PF18445">
    <property type="entry name" value="Zn_ribbon_PRDM4"/>
    <property type="match status" value="1"/>
</dbReference>
<dbReference type="PIRSF" id="PIRSF037161">
    <property type="entry name" value="PRDM4"/>
    <property type="match status" value="1"/>
</dbReference>
<dbReference type="SMART" id="SM00355">
    <property type="entry name" value="ZnF_C2H2"/>
    <property type="match status" value="7"/>
</dbReference>
<dbReference type="SUPFAM" id="SSF57667">
    <property type="entry name" value="beta-beta-alpha zinc fingers"/>
    <property type="match status" value="3"/>
</dbReference>
<dbReference type="PROSITE" id="PS50280">
    <property type="entry name" value="SET"/>
    <property type="match status" value="1"/>
</dbReference>
<dbReference type="PROSITE" id="PS00028">
    <property type="entry name" value="ZINC_FINGER_C2H2_1"/>
    <property type="match status" value="5"/>
</dbReference>
<dbReference type="PROSITE" id="PS50157">
    <property type="entry name" value="ZINC_FINGER_C2H2_2"/>
    <property type="match status" value="6"/>
</dbReference>
<protein>
    <recommendedName>
        <fullName>PR domain zinc finger protein 4</fullName>
        <ecNumber>2.1.1.-</ecNumber>
    </recommendedName>
    <alternativeName>
        <fullName>PR domain-containing protein 4</fullName>
    </alternativeName>
</protein>
<gene>
    <name type="primary">PRDM4</name>
</gene>
<name>PRDM4_PONAB</name>
<reference key="1">
    <citation type="submission" date="2004-11" db="EMBL/GenBank/DDBJ databases">
        <authorList>
            <consortium name="The German cDNA consortium"/>
        </authorList>
    </citation>
    <scope>NUCLEOTIDE SEQUENCE [LARGE SCALE MRNA]</scope>
    <source>
        <tissue>Kidney</tissue>
    </source>
</reference>
<feature type="chain" id="PRO_0000341944" description="PR domain zinc finger protein 4">
    <location>
        <begin position="1"/>
        <end position="801"/>
    </location>
</feature>
<feature type="domain" description="SET" evidence="3">
    <location>
        <begin position="412"/>
        <end position="529"/>
    </location>
</feature>
<feature type="zinc finger region" description="C2H2-type 1; atypical" evidence="2">
    <location>
        <begin position="545"/>
        <end position="566"/>
    </location>
</feature>
<feature type="zinc finger region" description="C2H2-type 2" evidence="2">
    <location>
        <begin position="618"/>
        <end position="640"/>
    </location>
</feature>
<feature type="zinc finger region" description="C2H2-type 3" evidence="2">
    <location>
        <begin position="646"/>
        <end position="668"/>
    </location>
</feature>
<feature type="zinc finger region" description="C2H2-type 4" evidence="2">
    <location>
        <begin position="674"/>
        <end position="696"/>
    </location>
</feature>
<feature type="zinc finger region" description="C2H2-type 5" evidence="2">
    <location>
        <begin position="702"/>
        <end position="724"/>
    </location>
</feature>
<feature type="zinc finger region" description="C2H2-type 6; atypical" evidence="2">
    <location>
        <begin position="730"/>
        <end position="752"/>
    </location>
</feature>
<feature type="region of interest" description="Disordered" evidence="4">
    <location>
        <begin position="751"/>
        <end position="782"/>
    </location>
</feature>
<feature type="compositionally biased region" description="Acidic residues" evidence="4">
    <location>
        <begin position="762"/>
        <end position="776"/>
    </location>
</feature>
<accession>Q5R5M1</accession>
<sequence>MHHRMNEMNLSPVGMEQLTSSSVSNALPVSGSHLGLAASPTHSAIPAPGLPVAIPNLGPSLSSLPSALSLMLPMGIGDRGVMCGLPERNYTLPPPPYPHLESSYFRTILPGILSYLADRPPPQYIHPNSINVDGNTALSITNNASALDPYQSNGNVGLEPGIVSIDSRSVNTHGAQSLHPSDGHEVALDTAITMENVSRVTSPISTDGMAEELTMDGVAGEHSQIPNGSRSHEPLSVDSVSNNLAADAVGHGGVIPMHGNGLELPVVMETDHIASRVNGMSDSALSDSIHTVAMSTNSVSVALSTSHNLASLESVSLHEVGLSLEPVAVSSITQEVAMGTGHVDVSSDSLSFVPPSLQMEDSNSNKENMATLFTIWCTLCDRAYPSDCPEHGPVTFVPDTPIESRARLSLPKQLVLRQSIVGAEVGVWTGETIPVRTCFGPLIGQQSHSMEVAEWTDKAVNHIWKIYHNGVLEFCIITADENECNWMMFVRKARNREEQNLVAYPHDGKIFFCTSQDIPPENELLFYYSRDYAQQIGVPEHPDVHLCNCGKECNSYTEFKAHLTSHIHNHLPTQGHSGSHGPSHSKERKWKCSMCPQAFISPSKLHVHFMGHMGMKPHKCDFCSKAFSDPSNLRTHLKIHTGQKNYRCTLCDKSFTQKAHLESHMVIHTGEKNLKCDYCDKLFMRRQDLKQHVLIHTQERQIKCPKCDKLFLRTNHLKKHLNSHEGKRDYVCEKCTKAYLTKYHLTRHLKTCKGPTSSSSAPEEEEEDDSEEEDLADSVGTEDCRINSAVYSADESLSAHK</sequence>
<keyword id="KW-0238">DNA-binding</keyword>
<keyword id="KW-0479">Metal-binding</keyword>
<keyword id="KW-0489">Methyltransferase</keyword>
<keyword id="KW-0539">Nucleus</keyword>
<keyword id="KW-1185">Reference proteome</keyword>
<keyword id="KW-0677">Repeat</keyword>
<keyword id="KW-0949">S-adenosyl-L-methionine</keyword>
<keyword id="KW-0804">Transcription</keyword>
<keyword id="KW-0805">Transcription regulation</keyword>
<keyword id="KW-0808">Transferase</keyword>
<keyword id="KW-0862">Zinc</keyword>
<keyword id="KW-0863">Zinc-finger</keyword>